<evidence type="ECO:0000255" key="1">
    <source>
        <dbReference type="HAMAP-Rule" id="MF_00305"/>
    </source>
</evidence>
<accession>Q9YDZ7</accession>
<name>SRP19_AERPE</name>
<sequence>MVFLREKEGPSGGSGRRIILWPAYFDSTLPRRLGRRVPRDMGVPSPKPEDVAEAARRAGFEAVVEESSYPRLWWRVRRRIVVLAPEDVSKTDIIKAVATELRKIAAARRKRS</sequence>
<protein>
    <recommendedName>
        <fullName evidence="1">Signal recognition particle 19 kDa protein</fullName>
        <shortName evidence="1">SRP19</shortName>
    </recommendedName>
</protein>
<proteinExistence type="inferred from homology"/>
<gene>
    <name evidence="1" type="primary">srp19</name>
    <name type="ordered locus">APE_0772</name>
</gene>
<feature type="chain" id="PRO_0000135213" description="Signal recognition particle 19 kDa protein">
    <location>
        <begin position="1"/>
        <end position="112"/>
    </location>
</feature>
<organism>
    <name type="scientific">Aeropyrum pernix (strain ATCC 700893 / DSM 11879 / JCM 9820 / NBRC 100138 / K1)</name>
    <dbReference type="NCBI Taxonomy" id="272557"/>
    <lineage>
        <taxon>Archaea</taxon>
        <taxon>Thermoproteota</taxon>
        <taxon>Thermoprotei</taxon>
        <taxon>Desulfurococcales</taxon>
        <taxon>Desulfurococcaceae</taxon>
        <taxon>Aeropyrum</taxon>
    </lineage>
</organism>
<reference key="1">
    <citation type="journal article" date="1999" name="DNA Res.">
        <title>Complete genome sequence of an aerobic hyper-thermophilic crenarchaeon, Aeropyrum pernix K1.</title>
        <authorList>
            <person name="Kawarabayasi Y."/>
            <person name="Hino Y."/>
            <person name="Horikawa H."/>
            <person name="Yamazaki S."/>
            <person name="Haikawa Y."/>
            <person name="Jin-no K."/>
            <person name="Takahashi M."/>
            <person name="Sekine M."/>
            <person name="Baba S."/>
            <person name="Ankai A."/>
            <person name="Kosugi H."/>
            <person name="Hosoyama A."/>
            <person name="Fukui S."/>
            <person name="Nagai Y."/>
            <person name="Nishijima K."/>
            <person name="Nakazawa H."/>
            <person name="Takamiya M."/>
            <person name="Masuda S."/>
            <person name="Funahashi T."/>
            <person name="Tanaka T."/>
            <person name="Kudoh Y."/>
            <person name="Yamazaki J."/>
            <person name="Kushida N."/>
            <person name="Oguchi A."/>
            <person name="Aoki K."/>
            <person name="Kubota K."/>
            <person name="Nakamura Y."/>
            <person name="Nomura N."/>
            <person name="Sako Y."/>
            <person name="Kikuchi H."/>
        </authorList>
    </citation>
    <scope>NUCLEOTIDE SEQUENCE [LARGE SCALE GENOMIC DNA]</scope>
    <source>
        <strain>ATCC 700893 / DSM 11879 / JCM 9820 / NBRC 100138 / K1</strain>
    </source>
</reference>
<comment type="function">
    <text evidence="1">Involved in targeting and insertion of nascent membrane proteins into the cytoplasmic membrane. Binds directly to 7S RNA and mediates binding of the 54 kDa subunit of the SRP.</text>
</comment>
<comment type="subunit">
    <text evidence="1">Part of the signal recognition particle protein translocation system, which is composed of SRP and FtsY. Archaeal SRP consists of a 7S RNA molecule of 300 nucleotides and two protein subunits: SRP54 and SRP19.</text>
</comment>
<comment type="subcellular location">
    <subcellularLocation>
        <location evidence="1">Cytoplasm</location>
    </subcellularLocation>
</comment>
<comment type="similarity">
    <text evidence="1">Belongs to the SRP19 family.</text>
</comment>
<dbReference type="EMBL" id="BA000002">
    <property type="protein sequence ID" value="BAA79750.1"/>
    <property type="molecule type" value="Genomic_DNA"/>
</dbReference>
<dbReference type="PIR" id="F72668">
    <property type="entry name" value="F72668"/>
</dbReference>
<dbReference type="RefSeq" id="WP_010865961.1">
    <property type="nucleotide sequence ID" value="NC_000854.2"/>
</dbReference>
<dbReference type="SMR" id="Q9YDZ7"/>
<dbReference type="STRING" id="272557.APE_0772"/>
<dbReference type="EnsemblBacteria" id="BAA79750">
    <property type="protein sequence ID" value="BAA79750"/>
    <property type="gene ID" value="APE_0772"/>
</dbReference>
<dbReference type="GeneID" id="1444885"/>
<dbReference type="KEGG" id="ape:APE_0772"/>
<dbReference type="eggNOG" id="arCOG01217">
    <property type="taxonomic scope" value="Archaea"/>
</dbReference>
<dbReference type="Proteomes" id="UP000002518">
    <property type="component" value="Chromosome"/>
</dbReference>
<dbReference type="GO" id="GO:0048500">
    <property type="term" value="C:signal recognition particle"/>
    <property type="evidence" value="ECO:0007669"/>
    <property type="project" value="UniProtKB-UniRule"/>
</dbReference>
<dbReference type="GO" id="GO:0008312">
    <property type="term" value="F:7S RNA binding"/>
    <property type="evidence" value="ECO:0007669"/>
    <property type="project" value="UniProtKB-UniRule"/>
</dbReference>
<dbReference type="GO" id="GO:0006614">
    <property type="term" value="P:SRP-dependent cotranslational protein targeting to membrane"/>
    <property type="evidence" value="ECO:0007669"/>
    <property type="project" value="InterPro"/>
</dbReference>
<dbReference type="Gene3D" id="3.30.56.30">
    <property type="entry name" value="Signal recognition particle, SRP19-like subunit"/>
    <property type="match status" value="1"/>
</dbReference>
<dbReference type="HAMAP" id="MF_00305">
    <property type="entry name" value="SRP19"/>
    <property type="match status" value="1"/>
</dbReference>
<dbReference type="InterPro" id="IPR002778">
    <property type="entry name" value="Signal_recog_particle_SRP19"/>
</dbReference>
<dbReference type="InterPro" id="IPR036521">
    <property type="entry name" value="SRP19-like_sf"/>
</dbReference>
<dbReference type="InterPro" id="IPR022938">
    <property type="entry name" value="SRP19_arc-type"/>
</dbReference>
<dbReference type="Pfam" id="PF01922">
    <property type="entry name" value="SRP19"/>
    <property type="match status" value="1"/>
</dbReference>
<dbReference type="SUPFAM" id="SSF69695">
    <property type="entry name" value="SRP19"/>
    <property type="match status" value="1"/>
</dbReference>
<keyword id="KW-0963">Cytoplasm</keyword>
<keyword id="KW-1185">Reference proteome</keyword>
<keyword id="KW-0687">Ribonucleoprotein</keyword>
<keyword id="KW-0694">RNA-binding</keyword>
<keyword id="KW-0733">Signal recognition particle</keyword>